<comment type="function">
    <text evidence="1">May play a key role in the regulation of the intracellular concentration of adenosylhomocysteine.</text>
</comment>
<comment type="catalytic activity">
    <reaction evidence="1">
        <text>S-adenosyl-L-homocysteine + H2O = L-homocysteine + adenosine</text>
        <dbReference type="Rhea" id="RHEA:21708"/>
        <dbReference type="ChEBI" id="CHEBI:15377"/>
        <dbReference type="ChEBI" id="CHEBI:16335"/>
        <dbReference type="ChEBI" id="CHEBI:57856"/>
        <dbReference type="ChEBI" id="CHEBI:58199"/>
        <dbReference type="EC" id="3.13.2.1"/>
    </reaction>
</comment>
<comment type="cofactor">
    <cofactor evidence="1">
        <name>NAD(+)</name>
        <dbReference type="ChEBI" id="CHEBI:57540"/>
    </cofactor>
    <text evidence="1">Binds 1 NAD(+) per subunit.</text>
</comment>
<comment type="pathway">
    <text evidence="1">Amino-acid biosynthesis; L-homocysteine biosynthesis; L-homocysteine from S-adenosyl-L-homocysteine: step 1/1.</text>
</comment>
<comment type="subcellular location">
    <subcellularLocation>
        <location evidence="1">Cytoplasm</location>
    </subcellularLocation>
</comment>
<comment type="similarity">
    <text evidence="1">Belongs to the adenosylhomocysteinase family.</text>
</comment>
<gene>
    <name evidence="1" type="primary">ahcY</name>
    <name type="ordered locus">sync_0108</name>
</gene>
<name>SAHH_SYNS3</name>
<dbReference type="EC" id="3.13.2.1" evidence="1"/>
<dbReference type="EMBL" id="CP000435">
    <property type="protein sequence ID" value="ABI45626.1"/>
    <property type="molecule type" value="Genomic_DNA"/>
</dbReference>
<dbReference type="RefSeq" id="WP_011618095.1">
    <property type="nucleotide sequence ID" value="NC_008319.1"/>
</dbReference>
<dbReference type="SMR" id="Q0IDX7"/>
<dbReference type="STRING" id="64471.sync_0108"/>
<dbReference type="KEGG" id="syg:sync_0108"/>
<dbReference type="eggNOG" id="COG0499">
    <property type="taxonomic scope" value="Bacteria"/>
</dbReference>
<dbReference type="HOGENOM" id="CLU_025194_2_1_3"/>
<dbReference type="OrthoDB" id="9802717at2"/>
<dbReference type="UniPathway" id="UPA00314">
    <property type="reaction ID" value="UER00076"/>
</dbReference>
<dbReference type="Proteomes" id="UP000001961">
    <property type="component" value="Chromosome"/>
</dbReference>
<dbReference type="GO" id="GO:0005829">
    <property type="term" value="C:cytosol"/>
    <property type="evidence" value="ECO:0007669"/>
    <property type="project" value="TreeGrafter"/>
</dbReference>
<dbReference type="GO" id="GO:0004013">
    <property type="term" value="F:adenosylhomocysteinase activity"/>
    <property type="evidence" value="ECO:0007669"/>
    <property type="project" value="UniProtKB-UniRule"/>
</dbReference>
<dbReference type="GO" id="GO:0071269">
    <property type="term" value="P:L-homocysteine biosynthetic process"/>
    <property type="evidence" value="ECO:0007669"/>
    <property type="project" value="UniProtKB-UniRule"/>
</dbReference>
<dbReference type="GO" id="GO:0006730">
    <property type="term" value="P:one-carbon metabolic process"/>
    <property type="evidence" value="ECO:0007669"/>
    <property type="project" value="UniProtKB-KW"/>
</dbReference>
<dbReference type="GO" id="GO:0033353">
    <property type="term" value="P:S-adenosylmethionine cycle"/>
    <property type="evidence" value="ECO:0007669"/>
    <property type="project" value="TreeGrafter"/>
</dbReference>
<dbReference type="CDD" id="cd00401">
    <property type="entry name" value="SAHH"/>
    <property type="match status" value="1"/>
</dbReference>
<dbReference type="FunFam" id="3.40.50.720:FF:000004">
    <property type="entry name" value="Adenosylhomocysteinase"/>
    <property type="match status" value="1"/>
</dbReference>
<dbReference type="Gene3D" id="3.40.50.1480">
    <property type="entry name" value="Adenosylhomocysteinase-like"/>
    <property type="match status" value="1"/>
</dbReference>
<dbReference type="Gene3D" id="3.40.50.720">
    <property type="entry name" value="NAD(P)-binding Rossmann-like Domain"/>
    <property type="match status" value="1"/>
</dbReference>
<dbReference type="HAMAP" id="MF_00563">
    <property type="entry name" value="AdoHcyase"/>
    <property type="match status" value="1"/>
</dbReference>
<dbReference type="InterPro" id="IPR042172">
    <property type="entry name" value="Adenosylhomocyst_ase-like_sf"/>
</dbReference>
<dbReference type="InterPro" id="IPR000043">
    <property type="entry name" value="Adenosylhomocysteinase-like"/>
</dbReference>
<dbReference type="InterPro" id="IPR015878">
    <property type="entry name" value="Ado_hCys_hydrolase_NAD-bd"/>
</dbReference>
<dbReference type="InterPro" id="IPR036291">
    <property type="entry name" value="NAD(P)-bd_dom_sf"/>
</dbReference>
<dbReference type="InterPro" id="IPR020082">
    <property type="entry name" value="S-Ado-L-homoCys_hydrolase_CS"/>
</dbReference>
<dbReference type="NCBIfam" id="TIGR00936">
    <property type="entry name" value="ahcY"/>
    <property type="match status" value="1"/>
</dbReference>
<dbReference type="NCBIfam" id="NF004005">
    <property type="entry name" value="PRK05476.2-3"/>
    <property type="match status" value="1"/>
</dbReference>
<dbReference type="PANTHER" id="PTHR23420">
    <property type="entry name" value="ADENOSYLHOMOCYSTEINASE"/>
    <property type="match status" value="1"/>
</dbReference>
<dbReference type="PANTHER" id="PTHR23420:SF0">
    <property type="entry name" value="ADENOSYLHOMOCYSTEINASE"/>
    <property type="match status" value="1"/>
</dbReference>
<dbReference type="Pfam" id="PF05221">
    <property type="entry name" value="AdoHcyase"/>
    <property type="match status" value="1"/>
</dbReference>
<dbReference type="Pfam" id="PF00670">
    <property type="entry name" value="AdoHcyase_NAD"/>
    <property type="match status" value="1"/>
</dbReference>
<dbReference type="PIRSF" id="PIRSF001109">
    <property type="entry name" value="Ad_hcy_hydrolase"/>
    <property type="match status" value="1"/>
</dbReference>
<dbReference type="SMART" id="SM00996">
    <property type="entry name" value="AdoHcyase"/>
    <property type="match status" value="1"/>
</dbReference>
<dbReference type="SMART" id="SM00997">
    <property type="entry name" value="AdoHcyase_NAD"/>
    <property type="match status" value="1"/>
</dbReference>
<dbReference type="SUPFAM" id="SSF52283">
    <property type="entry name" value="Formate/glycerate dehydrogenase catalytic domain-like"/>
    <property type="match status" value="1"/>
</dbReference>
<dbReference type="SUPFAM" id="SSF51735">
    <property type="entry name" value="NAD(P)-binding Rossmann-fold domains"/>
    <property type="match status" value="1"/>
</dbReference>
<dbReference type="PROSITE" id="PS00738">
    <property type="entry name" value="ADOHCYASE_1"/>
    <property type="match status" value="1"/>
</dbReference>
<dbReference type="PROSITE" id="PS00739">
    <property type="entry name" value="ADOHCYASE_2"/>
    <property type="match status" value="1"/>
</dbReference>
<feature type="chain" id="PRO_1000024761" description="Adenosylhomocysteinase">
    <location>
        <begin position="1"/>
        <end position="476"/>
    </location>
</feature>
<feature type="binding site" evidence="1">
    <location>
        <position position="67"/>
    </location>
    <ligand>
        <name>substrate</name>
    </ligand>
</feature>
<feature type="binding site" evidence="1">
    <location>
        <position position="142"/>
    </location>
    <ligand>
        <name>substrate</name>
    </ligand>
</feature>
<feature type="binding site" evidence="1">
    <location>
        <position position="202"/>
    </location>
    <ligand>
        <name>substrate</name>
    </ligand>
</feature>
<feature type="binding site" evidence="1">
    <location>
        <begin position="203"/>
        <end position="205"/>
    </location>
    <ligand>
        <name>NAD(+)</name>
        <dbReference type="ChEBI" id="CHEBI:57540"/>
    </ligand>
</feature>
<feature type="binding site" evidence="1">
    <location>
        <position position="232"/>
    </location>
    <ligand>
        <name>substrate</name>
    </ligand>
</feature>
<feature type="binding site" evidence="1">
    <location>
        <position position="236"/>
    </location>
    <ligand>
        <name>substrate</name>
    </ligand>
</feature>
<feature type="binding site" evidence="1">
    <location>
        <position position="237"/>
    </location>
    <ligand>
        <name>NAD(+)</name>
        <dbReference type="ChEBI" id="CHEBI:57540"/>
    </ligand>
</feature>
<feature type="binding site" evidence="1">
    <location>
        <begin position="266"/>
        <end position="271"/>
    </location>
    <ligand>
        <name>NAD(+)</name>
        <dbReference type="ChEBI" id="CHEBI:57540"/>
    </ligand>
</feature>
<feature type="binding site" evidence="1">
    <location>
        <position position="289"/>
    </location>
    <ligand>
        <name>NAD(+)</name>
        <dbReference type="ChEBI" id="CHEBI:57540"/>
    </ligand>
</feature>
<feature type="binding site" evidence="1">
    <location>
        <position position="324"/>
    </location>
    <ligand>
        <name>NAD(+)</name>
        <dbReference type="ChEBI" id="CHEBI:57540"/>
    </ligand>
</feature>
<feature type="binding site" evidence="1">
    <location>
        <begin position="345"/>
        <end position="347"/>
    </location>
    <ligand>
        <name>NAD(+)</name>
        <dbReference type="ChEBI" id="CHEBI:57540"/>
    </ligand>
</feature>
<feature type="binding site" evidence="1">
    <location>
        <position position="390"/>
    </location>
    <ligand>
        <name>NAD(+)</name>
        <dbReference type="ChEBI" id="CHEBI:57540"/>
    </ligand>
</feature>
<protein>
    <recommendedName>
        <fullName evidence="1">Adenosylhomocysteinase</fullName>
        <ecNumber evidence="1">3.13.2.1</ecNumber>
    </recommendedName>
    <alternativeName>
        <fullName evidence="1">S-adenosyl-L-homocysteine hydrolase</fullName>
        <shortName evidence="1">AdoHcyase</shortName>
    </alternativeName>
</protein>
<evidence type="ECO:0000255" key="1">
    <source>
        <dbReference type="HAMAP-Rule" id="MF_00563"/>
    </source>
</evidence>
<sequence length="476" mass="51915">MVATAAATAELQVAKDYVIADIGLADFGRKELNIAETEMPGLMALRAKYGKDKPLKGARIAGSLHMTIQTAVLIETLVELGADVRWASCNIFSTQDHAAAAMAAGGIPVFAVKGETLEEYWDYTHSILEWGDGGTPNMILDDGGDATGLVMLGSKAEQDITVLDNPSNEEETFLFASIKKKLAKDSSFYSRIKAEIQGVTEETTTGVARLYKMQKSGELPFPAINVNDSVTKSKFDNLYGCRESLVDSIKRATDVMVAGKQALVVGYGDVGKGSAQSLRGLGATVCIAEVDPICALQAAMEGYRVVRLEDVVDQMDIFVTATGNYQVIRNEHLVKMKDEAIVCNIGHFDNEIDVASLKSYEWDNIKPQVDHITLPSGNKIILLAEGRLVNLGCATGHPSFVMSNSFTNQVLAQIELFTKGSEYGKEVYVLPKHLDEMVARLHLEKIGCKLTELSKDQADYINVPVEGPYKPDHYRY</sequence>
<accession>Q0IDX7</accession>
<reference key="1">
    <citation type="journal article" date="2006" name="Proc. Natl. Acad. Sci. U.S.A.">
        <title>Genome sequence of Synechococcus CC9311: insights into adaptation to a coastal environment.</title>
        <authorList>
            <person name="Palenik B."/>
            <person name="Ren Q."/>
            <person name="Dupont C.L."/>
            <person name="Myers G.S."/>
            <person name="Heidelberg J.F."/>
            <person name="Badger J.H."/>
            <person name="Madupu R."/>
            <person name="Nelson W.C."/>
            <person name="Brinkac L.M."/>
            <person name="Dodson R.J."/>
            <person name="Durkin A.S."/>
            <person name="Daugherty S.C."/>
            <person name="Sullivan S.A."/>
            <person name="Khouri H."/>
            <person name="Mohamoud Y."/>
            <person name="Halpin R."/>
            <person name="Paulsen I.T."/>
        </authorList>
    </citation>
    <scope>NUCLEOTIDE SEQUENCE [LARGE SCALE GENOMIC DNA]</scope>
    <source>
        <strain>CC9311</strain>
    </source>
</reference>
<proteinExistence type="inferred from homology"/>
<keyword id="KW-0963">Cytoplasm</keyword>
<keyword id="KW-0378">Hydrolase</keyword>
<keyword id="KW-0520">NAD</keyword>
<keyword id="KW-0554">One-carbon metabolism</keyword>
<keyword id="KW-1185">Reference proteome</keyword>
<organism>
    <name type="scientific">Synechococcus sp. (strain CC9311)</name>
    <dbReference type="NCBI Taxonomy" id="64471"/>
    <lineage>
        <taxon>Bacteria</taxon>
        <taxon>Bacillati</taxon>
        <taxon>Cyanobacteriota</taxon>
        <taxon>Cyanophyceae</taxon>
        <taxon>Synechococcales</taxon>
        <taxon>Synechococcaceae</taxon>
        <taxon>Synechococcus</taxon>
    </lineage>
</organism>